<keyword id="KW-0021">Allosteric enzyme</keyword>
<keyword id="KW-0328">Glycosyltransferase</keyword>
<keyword id="KW-0342">GTP-binding</keyword>
<keyword id="KW-0460">Magnesium</keyword>
<keyword id="KW-0547">Nucleotide-binding</keyword>
<keyword id="KW-1185">Reference proteome</keyword>
<keyword id="KW-0808">Transferase</keyword>
<dbReference type="EC" id="2.4.2.9" evidence="1"/>
<dbReference type="EMBL" id="AM180355">
    <property type="protein sequence ID" value="CAJ70382.1"/>
    <property type="molecule type" value="Genomic_DNA"/>
</dbReference>
<dbReference type="RefSeq" id="WP_003437840.1">
    <property type="nucleotide sequence ID" value="NZ_JAUPES010000009.1"/>
</dbReference>
<dbReference type="RefSeq" id="YP_001089999.1">
    <property type="nucleotide sequence ID" value="NC_009089.1"/>
</dbReference>
<dbReference type="SMR" id="Q180X8"/>
<dbReference type="STRING" id="272563.CD630_34790"/>
<dbReference type="EnsemblBacteria" id="CAJ70382">
    <property type="protein sequence ID" value="CAJ70382"/>
    <property type="gene ID" value="CD630_34790"/>
</dbReference>
<dbReference type="GeneID" id="66355940"/>
<dbReference type="KEGG" id="cdf:CD630_34790"/>
<dbReference type="KEGG" id="pdc:CDIF630_03790"/>
<dbReference type="PATRIC" id="fig|272563.120.peg.3677"/>
<dbReference type="eggNOG" id="COG0035">
    <property type="taxonomic scope" value="Bacteria"/>
</dbReference>
<dbReference type="OrthoDB" id="9781675at2"/>
<dbReference type="PhylomeDB" id="Q180X8"/>
<dbReference type="BioCyc" id="PDIF272563:G12WB-3659-MONOMER"/>
<dbReference type="UniPathway" id="UPA00574">
    <property type="reaction ID" value="UER00636"/>
</dbReference>
<dbReference type="Proteomes" id="UP000001978">
    <property type="component" value="Chromosome"/>
</dbReference>
<dbReference type="GO" id="GO:0005525">
    <property type="term" value="F:GTP binding"/>
    <property type="evidence" value="ECO:0007669"/>
    <property type="project" value="UniProtKB-KW"/>
</dbReference>
<dbReference type="GO" id="GO:0000287">
    <property type="term" value="F:magnesium ion binding"/>
    <property type="evidence" value="ECO:0007669"/>
    <property type="project" value="UniProtKB-UniRule"/>
</dbReference>
<dbReference type="GO" id="GO:0004845">
    <property type="term" value="F:uracil phosphoribosyltransferase activity"/>
    <property type="evidence" value="ECO:0007669"/>
    <property type="project" value="UniProtKB-UniRule"/>
</dbReference>
<dbReference type="GO" id="GO:0044206">
    <property type="term" value="P:UMP salvage"/>
    <property type="evidence" value="ECO:0007669"/>
    <property type="project" value="UniProtKB-UniRule"/>
</dbReference>
<dbReference type="GO" id="GO:0006223">
    <property type="term" value="P:uracil salvage"/>
    <property type="evidence" value="ECO:0007669"/>
    <property type="project" value="InterPro"/>
</dbReference>
<dbReference type="CDD" id="cd06223">
    <property type="entry name" value="PRTases_typeI"/>
    <property type="match status" value="1"/>
</dbReference>
<dbReference type="FunFam" id="3.40.50.2020:FF:000003">
    <property type="entry name" value="Uracil phosphoribosyltransferase"/>
    <property type="match status" value="1"/>
</dbReference>
<dbReference type="Gene3D" id="3.40.50.2020">
    <property type="match status" value="1"/>
</dbReference>
<dbReference type="HAMAP" id="MF_01218_B">
    <property type="entry name" value="Upp_B"/>
    <property type="match status" value="1"/>
</dbReference>
<dbReference type="InterPro" id="IPR000836">
    <property type="entry name" value="PRibTrfase_dom"/>
</dbReference>
<dbReference type="InterPro" id="IPR029057">
    <property type="entry name" value="PRTase-like"/>
</dbReference>
<dbReference type="InterPro" id="IPR034332">
    <property type="entry name" value="Upp_B"/>
</dbReference>
<dbReference type="InterPro" id="IPR050054">
    <property type="entry name" value="UPRTase/APRTase"/>
</dbReference>
<dbReference type="InterPro" id="IPR005765">
    <property type="entry name" value="Ura_phspho_trans"/>
</dbReference>
<dbReference type="NCBIfam" id="NF001097">
    <property type="entry name" value="PRK00129.1"/>
    <property type="match status" value="1"/>
</dbReference>
<dbReference type="NCBIfam" id="TIGR01091">
    <property type="entry name" value="upp"/>
    <property type="match status" value="1"/>
</dbReference>
<dbReference type="PANTHER" id="PTHR32315">
    <property type="entry name" value="ADENINE PHOSPHORIBOSYLTRANSFERASE"/>
    <property type="match status" value="1"/>
</dbReference>
<dbReference type="PANTHER" id="PTHR32315:SF4">
    <property type="entry name" value="URACIL PHOSPHORIBOSYLTRANSFERASE, CHLOROPLASTIC"/>
    <property type="match status" value="1"/>
</dbReference>
<dbReference type="Pfam" id="PF14681">
    <property type="entry name" value="UPRTase"/>
    <property type="match status" value="1"/>
</dbReference>
<dbReference type="SUPFAM" id="SSF53271">
    <property type="entry name" value="PRTase-like"/>
    <property type="match status" value="1"/>
</dbReference>
<feature type="chain" id="PRO_1000053705" description="Uracil phosphoribosyltransferase">
    <location>
        <begin position="1"/>
        <end position="209"/>
    </location>
</feature>
<feature type="binding site" evidence="1">
    <location>
        <position position="79"/>
    </location>
    <ligand>
        <name>5-phospho-alpha-D-ribose 1-diphosphate</name>
        <dbReference type="ChEBI" id="CHEBI:58017"/>
    </ligand>
</feature>
<feature type="binding site" evidence="1">
    <location>
        <position position="104"/>
    </location>
    <ligand>
        <name>5-phospho-alpha-D-ribose 1-diphosphate</name>
        <dbReference type="ChEBI" id="CHEBI:58017"/>
    </ligand>
</feature>
<feature type="binding site" evidence="1">
    <location>
        <begin position="131"/>
        <end position="139"/>
    </location>
    <ligand>
        <name>5-phospho-alpha-D-ribose 1-diphosphate</name>
        <dbReference type="ChEBI" id="CHEBI:58017"/>
    </ligand>
</feature>
<feature type="binding site" evidence="1">
    <location>
        <position position="194"/>
    </location>
    <ligand>
        <name>uracil</name>
        <dbReference type="ChEBI" id="CHEBI:17568"/>
    </ligand>
</feature>
<feature type="binding site" evidence="1">
    <location>
        <begin position="199"/>
        <end position="201"/>
    </location>
    <ligand>
        <name>uracil</name>
        <dbReference type="ChEBI" id="CHEBI:17568"/>
    </ligand>
</feature>
<feature type="binding site" evidence="1">
    <location>
        <position position="200"/>
    </location>
    <ligand>
        <name>5-phospho-alpha-D-ribose 1-diphosphate</name>
        <dbReference type="ChEBI" id="CHEBI:58017"/>
    </ligand>
</feature>
<sequence length="209" mass="22702">MSKVVETNHPLIQHKLTLMRDKNTGSKDFRELLTEIAMLMGYEITKDIPLKDVEIETPIQKTSSKVVAGKKLAIIPILRAGLGMVDGLVSLMPAAKVGHVGLYRDPETLKPVEYYCKLPQDIGERDIIVVDPMLATGGSAVAAIDLLKSKGAKSIKLANLVAAPEGIAEVQKYHDDVDIYVASVDERLNEHGYIIPGLGDAGDRLFGTK</sequence>
<proteinExistence type="inferred from homology"/>
<organism>
    <name type="scientific">Clostridioides difficile (strain 630)</name>
    <name type="common">Peptoclostridium difficile</name>
    <dbReference type="NCBI Taxonomy" id="272563"/>
    <lineage>
        <taxon>Bacteria</taxon>
        <taxon>Bacillati</taxon>
        <taxon>Bacillota</taxon>
        <taxon>Clostridia</taxon>
        <taxon>Peptostreptococcales</taxon>
        <taxon>Peptostreptococcaceae</taxon>
        <taxon>Clostridioides</taxon>
    </lineage>
</organism>
<evidence type="ECO:0000255" key="1">
    <source>
        <dbReference type="HAMAP-Rule" id="MF_01218"/>
    </source>
</evidence>
<gene>
    <name evidence="1" type="primary">upp</name>
    <name type="ordered locus">CD630_34790</name>
</gene>
<name>UPP_CLOD6</name>
<reference key="1">
    <citation type="journal article" date="2006" name="Nat. Genet.">
        <title>The multidrug-resistant human pathogen Clostridium difficile has a highly mobile, mosaic genome.</title>
        <authorList>
            <person name="Sebaihia M."/>
            <person name="Wren B.W."/>
            <person name="Mullany P."/>
            <person name="Fairweather N.F."/>
            <person name="Minton N."/>
            <person name="Stabler R."/>
            <person name="Thomson N.R."/>
            <person name="Roberts A.P."/>
            <person name="Cerdeno-Tarraga A.M."/>
            <person name="Wang H."/>
            <person name="Holden M.T.G."/>
            <person name="Wright A."/>
            <person name="Churcher C."/>
            <person name="Quail M.A."/>
            <person name="Baker S."/>
            <person name="Bason N."/>
            <person name="Brooks K."/>
            <person name="Chillingworth T."/>
            <person name="Cronin A."/>
            <person name="Davis P."/>
            <person name="Dowd L."/>
            <person name="Fraser A."/>
            <person name="Feltwell T."/>
            <person name="Hance Z."/>
            <person name="Holroyd S."/>
            <person name="Jagels K."/>
            <person name="Moule S."/>
            <person name="Mungall K."/>
            <person name="Price C."/>
            <person name="Rabbinowitsch E."/>
            <person name="Sharp S."/>
            <person name="Simmonds M."/>
            <person name="Stevens K."/>
            <person name="Unwin L."/>
            <person name="Whithead S."/>
            <person name="Dupuy B."/>
            <person name="Dougan G."/>
            <person name="Barrell B."/>
            <person name="Parkhill J."/>
        </authorList>
    </citation>
    <scope>NUCLEOTIDE SEQUENCE [LARGE SCALE GENOMIC DNA]</scope>
    <source>
        <strain>630</strain>
    </source>
</reference>
<accession>Q180X8</accession>
<protein>
    <recommendedName>
        <fullName evidence="1">Uracil phosphoribosyltransferase</fullName>
        <ecNumber evidence="1">2.4.2.9</ecNumber>
    </recommendedName>
    <alternativeName>
        <fullName evidence="1">UMP pyrophosphorylase</fullName>
    </alternativeName>
    <alternativeName>
        <fullName evidence="1">UPRTase</fullName>
    </alternativeName>
</protein>
<comment type="function">
    <text evidence="1">Catalyzes the conversion of uracil and 5-phospho-alpha-D-ribose 1-diphosphate (PRPP) to UMP and diphosphate.</text>
</comment>
<comment type="catalytic activity">
    <reaction evidence="1">
        <text>UMP + diphosphate = 5-phospho-alpha-D-ribose 1-diphosphate + uracil</text>
        <dbReference type="Rhea" id="RHEA:13017"/>
        <dbReference type="ChEBI" id="CHEBI:17568"/>
        <dbReference type="ChEBI" id="CHEBI:33019"/>
        <dbReference type="ChEBI" id="CHEBI:57865"/>
        <dbReference type="ChEBI" id="CHEBI:58017"/>
        <dbReference type="EC" id="2.4.2.9"/>
    </reaction>
</comment>
<comment type="cofactor">
    <cofactor evidence="1">
        <name>Mg(2+)</name>
        <dbReference type="ChEBI" id="CHEBI:18420"/>
    </cofactor>
    <text evidence="1">Binds 1 Mg(2+) ion per subunit. The magnesium is bound as Mg-PRPP.</text>
</comment>
<comment type="activity regulation">
    <text evidence="1">Allosterically activated by GTP.</text>
</comment>
<comment type="pathway">
    <text evidence="1">Pyrimidine metabolism; UMP biosynthesis via salvage pathway; UMP from uracil: step 1/1.</text>
</comment>
<comment type="similarity">
    <text evidence="1">Belongs to the UPRTase family.</text>
</comment>